<keyword id="KW-0963">Cytoplasm</keyword>
<keyword id="KW-0690">Ribosome biogenesis</keyword>
<protein>
    <recommendedName>
        <fullName evidence="1">Ribosome-binding factor A</fullName>
    </recommendedName>
</protein>
<accession>C4ZBF3</accession>
<gene>
    <name evidence="1" type="primary">rbfA</name>
    <name type="ordered locus">EUBREC_1942</name>
</gene>
<sequence length="121" mass="13589">MRKNSIKNIRINEEVMRELSNIIRGEIKDPRINPMTSVVAVEVAPDLKTAKAYISVLGDKKSQADTLAGLKSAEGYIRRTLAKNINLRNTPAITFIIDQSIEYGVEMSKKIDEVTKNLKED</sequence>
<reference key="1">
    <citation type="journal article" date="2009" name="Proc. Natl. Acad. Sci. U.S.A.">
        <title>Characterizing a model human gut microbiota composed of members of its two dominant bacterial phyla.</title>
        <authorList>
            <person name="Mahowald M.A."/>
            <person name="Rey F.E."/>
            <person name="Seedorf H."/>
            <person name="Turnbaugh P.J."/>
            <person name="Fulton R.S."/>
            <person name="Wollam A."/>
            <person name="Shah N."/>
            <person name="Wang C."/>
            <person name="Magrini V."/>
            <person name="Wilson R.K."/>
            <person name="Cantarel B.L."/>
            <person name="Coutinho P.M."/>
            <person name="Henrissat B."/>
            <person name="Crock L.W."/>
            <person name="Russell A."/>
            <person name="Verberkmoes N.C."/>
            <person name="Hettich R.L."/>
            <person name="Gordon J.I."/>
        </authorList>
    </citation>
    <scope>NUCLEOTIDE SEQUENCE [LARGE SCALE GENOMIC DNA]</scope>
    <source>
        <strain>ATCC 33656 / DSM 3377 / JCM 17463 / KCTC 5835 / LMG 30912 / VPI 0990</strain>
    </source>
</reference>
<name>RBFA_AGARV</name>
<comment type="function">
    <text evidence="1">One of several proteins that assist in the late maturation steps of the functional core of the 30S ribosomal subunit. Associates with free 30S ribosomal subunits (but not with 30S subunits that are part of 70S ribosomes or polysomes). Required for efficient processing of 16S rRNA. May interact with the 5'-terminal helix region of 16S rRNA.</text>
</comment>
<comment type="subunit">
    <text evidence="1">Monomer. Binds 30S ribosomal subunits, but not 50S ribosomal subunits or 70S ribosomes.</text>
</comment>
<comment type="subcellular location">
    <subcellularLocation>
        <location evidence="1">Cytoplasm</location>
    </subcellularLocation>
</comment>
<comment type="similarity">
    <text evidence="1">Belongs to the RbfA family.</text>
</comment>
<proteinExistence type="inferred from homology"/>
<evidence type="ECO:0000255" key="1">
    <source>
        <dbReference type="HAMAP-Rule" id="MF_00003"/>
    </source>
</evidence>
<feature type="chain" id="PRO_1000201631" description="Ribosome-binding factor A">
    <location>
        <begin position="1"/>
        <end position="121"/>
    </location>
</feature>
<organism>
    <name type="scientific">Agathobacter rectalis (strain ATCC 33656 / DSM 3377 / JCM 17463 / KCTC 5835 / VPI 0990)</name>
    <name type="common">Eubacterium rectale</name>
    <dbReference type="NCBI Taxonomy" id="515619"/>
    <lineage>
        <taxon>Bacteria</taxon>
        <taxon>Bacillati</taxon>
        <taxon>Bacillota</taxon>
        <taxon>Clostridia</taxon>
        <taxon>Lachnospirales</taxon>
        <taxon>Lachnospiraceae</taxon>
        <taxon>Agathobacter</taxon>
    </lineage>
</organism>
<dbReference type="EMBL" id="CP001107">
    <property type="protein sequence ID" value="ACR75685.1"/>
    <property type="molecule type" value="Genomic_DNA"/>
</dbReference>
<dbReference type="RefSeq" id="WP_012742782.1">
    <property type="nucleotide sequence ID" value="NZ_CAXSYD010000002.1"/>
</dbReference>
<dbReference type="SMR" id="C4ZBF3"/>
<dbReference type="STRING" id="515619.EUBREC_1942"/>
<dbReference type="PaxDb" id="515619-EUBREC_1942"/>
<dbReference type="GeneID" id="86988733"/>
<dbReference type="KEGG" id="ere:EUBREC_1942"/>
<dbReference type="HOGENOM" id="CLU_089475_6_3_9"/>
<dbReference type="Proteomes" id="UP000001477">
    <property type="component" value="Chromosome"/>
</dbReference>
<dbReference type="GO" id="GO:0005829">
    <property type="term" value="C:cytosol"/>
    <property type="evidence" value="ECO:0007669"/>
    <property type="project" value="TreeGrafter"/>
</dbReference>
<dbReference type="GO" id="GO:0043024">
    <property type="term" value="F:ribosomal small subunit binding"/>
    <property type="evidence" value="ECO:0007669"/>
    <property type="project" value="TreeGrafter"/>
</dbReference>
<dbReference type="GO" id="GO:0030490">
    <property type="term" value="P:maturation of SSU-rRNA"/>
    <property type="evidence" value="ECO:0007669"/>
    <property type="project" value="UniProtKB-UniRule"/>
</dbReference>
<dbReference type="Gene3D" id="3.30.300.20">
    <property type="match status" value="1"/>
</dbReference>
<dbReference type="HAMAP" id="MF_00003">
    <property type="entry name" value="RbfA"/>
    <property type="match status" value="1"/>
</dbReference>
<dbReference type="InterPro" id="IPR015946">
    <property type="entry name" value="KH_dom-like_a/b"/>
</dbReference>
<dbReference type="InterPro" id="IPR000238">
    <property type="entry name" value="RbfA"/>
</dbReference>
<dbReference type="InterPro" id="IPR023799">
    <property type="entry name" value="RbfA_dom_sf"/>
</dbReference>
<dbReference type="InterPro" id="IPR020053">
    <property type="entry name" value="Ribosome-bd_factorA_CS"/>
</dbReference>
<dbReference type="NCBIfam" id="TIGR00082">
    <property type="entry name" value="rbfA"/>
    <property type="match status" value="1"/>
</dbReference>
<dbReference type="PANTHER" id="PTHR33515">
    <property type="entry name" value="RIBOSOME-BINDING FACTOR A, CHLOROPLASTIC-RELATED"/>
    <property type="match status" value="1"/>
</dbReference>
<dbReference type="PANTHER" id="PTHR33515:SF1">
    <property type="entry name" value="RIBOSOME-BINDING FACTOR A, CHLOROPLASTIC-RELATED"/>
    <property type="match status" value="1"/>
</dbReference>
<dbReference type="Pfam" id="PF02033">
    <property type="entry name" value="RBFA"/>
    <property type="match status" value="1"/>
</dbReference>
<dbReference type="SUPFAM" id="SSF89919">
    <property type="entry name" value="Ribosome-binding factor A, RbfA"/>
    <property type="match status" value="1"/>
</dbReference>
<dbReference type="PROSITE" id="PS01319">
    <property type="entry name" value="RBFA"/>
    <property type="match status" value="1"/>
</dbReference>